<name>PEPB_VIBVU</name>
<protein>
    <recommendedName>
        <fullName evidence="1">Peptidase B</fullName>
        <ecNumber evidence="1">3.4.11.23</ecNumber>
    </recommendedName>
    <alternativeName>
        <fullName evidence="1">Aminopeptidase B</fullName>
    </alternativeName>
</protein>
<reference key="1">
    <citation type="submission" date="2002-12" db="EMBL/GenBank/DDBJ databases">
        <title>Complete genome sequence of Vibrio vulnificus CMCP6.</title>
        <authorList>
            <person name="Rhee J.H."/>
            <person name="Kim S.Y."/>
            <person name="Chung S.S."/>
            <person name="Kim J.J."/>
            <person name="Moon Y.H."/>
            <person name="Jeong H."/>
            <person name="Choy H.E."/>
        </authorList>
    </citation>
    <scope>NUCLEOTIDE SEQUENCE [LARGE SCALE GENOMIC DNA]</scope>
    <source>
        <strain>CMCP6</strain>
    </source>
</reference>
<comment type="function">
    <text evidence="1">Probably plays an important role in intracellular peptide degradation.</text>
</comment>
<comment type="catalytic activity">
    <reaction evidence="1">
        <text>Release of an N-terminal amino acid, Xaa, from a peptide or arylamide. Xaa is preferably Glu or Asp but may be other amino acids, including Leu, Met, His, Cys and Gln.</text>
        <dbReference type="EC" id="3.4.11.23"/>
    </reaction>
</comment>
<comment type="cofactor">
    <cofactor evidence="1">
        <name>Mn(2+)</name>
        <dbReference type="ChEBI" id="CHEBI:29035"/>
    </cofactor>
    <text evidence="1">Binds 2 manganese ions per subunit.</text>
</comment>
<comment type="subunit">
    <text evidence="1">Homohexamer.</text>
</comment>
<comment type="subcellular location">
    <subcellularLocation>
        <location evidence="1">Cytoplasm</location>
    </subcellularLocation>
</comment>
<comment type="similarity">
    <text evidence="1">Belongs to the peptidase M17 family.</text>
</comment>
<feature type="chain" id="PRO_0000165849" description="Peptidase B">
    <location>
        <begin position="1"/>
        <end position="432"/>
    </location>
</feature>
<feature type="active site" evidence="1">
    <location>
        <position position="208"/>
    </location>
</feature>
<feature type="active site" evidence="1">
    <location>
        <position position="282"/>
    </location>
</feature>
<feature type="binding site" evidence="1">
    <location>
        <position position="196"/>
    </location>
    <ligand>
        <name>Mn(2+)</name>
        <dbReference type="ChEBI" id="CHEBI:29035"/>
        <label>2</label>
    </ligand>
</feature>
<feature type="binding site" evidence="1">
    <location>
        <position position="201"/>
    </location>
    <ligand>
        <name>Mn(2+)</name>
        <dbReference type="ChEBI" id="CHEBI:29035"/>
        <label>1</label>
    </ligand>
</feature>
<feature type="binding site" evidence="1">
    <location>
        <position position="201"/>
    </location>
    <ligand>
        <name>Mn(2+)</name>
        <dbReference type="ChEBI" id="CHEBI:29035"/>
        <label>2</label>
    </ligand>
</feature>
<feature type="binding site" evidence="1">
    <location>
        <position position="219"/>
    </location>
    <ligand>
        <name>Mn(2+)</name>
        <dbReference type="ChEBI" id="CHEBI:29035"/>
        <label>2</label>
    </ligand>
</feature>
<feature type="binding site" evidence="1">
    <location>
        <position position="278"/>
    </location>
    <ligand>
        <name>Mn(2+)</name>
        <dbReference type="ChEBI" id="CHEBI:29035"/>
        <label>1</label>
    </ligand>
</feature>
<feature type="binding site" evidence="1">
    <location>
        <position position="280"/>
    </location>
    <ligand>
        <name>Mn(2+)</name>
        <dbReference type="ChEBI" id="CHEBI:29035"/>
        <label>1</label>
    </ligand>
</feature>
<feature type="binding site" evidence="1">
    <location>
        <position position="280"/>
    </location>
    <ligand>
        <name>Mn(2+)</name>
        <dbReference type="ChEBI" id="CHEBI:29035"/>
        <label>2</label>
    </ligand>
</feature>
<accession>Q8DEZ4</accession>
<organism>
    <name type="scientific">Vibrio vulnificus (strain CMCP6)</name>
    <dbReference type="NCBI Taxonomy" id="216895"/>
    <lineage>
        <taxon>Bacteria</taxon>
        <taxon>Pseudomonadati</taxon>
        <taxon>Pseudomonadota</taxon>
        <taxon>Gammaproteobacteria</taxon>
        <taxon>Vibrionales</taxon>
        <taxon>Vibrionaceae</taxon>
        <taxon>Vibrio</taxon>
    </lineage>
</organism>
<evidence type="ECO:0000255" key="1">
    <source>
        <dbReference type="HAMAP-Rule" id="MF_00504"/>
    </source>
</evidence>
<dbReference type="EC" id="3.4.11.23" evidence="1"/>
<dbReference type="EMBL" id="AE016795">
    <property type="protein sequence ID" value="AAO08954.2"/>
    <property type="molecule type" value="Genomic_DNA"/>
</dbReference>
<dbReference type="RefSeq" id="WP_011078530.1">
    <property type="nucleotide sequence ID" value="NC_004459.3"/>
</dbReference>
<dbReference type="SMR" id="Q8DEZ4"/>
<dbReference type="MEROPS" id="M17.004"/>
<dbReference type="KEGG" id="vvu:VV1_0431"/>
<dbReference type="HOGENOM" id="CLU_013734_7_1_6"/>
<dbReference type="Proteomes" id="UP000002275">
    <property type="component" value="Chromosome 1"/>
</dbReference>
<dbReference type="GO" id="GO:0005737">
    <property type="term" value="C:cytoplasm"/>
    <property type="evidence" value="ECO:0007669"/>
    <property type="project" value="UniProtKB-SubCell"/>
</dbReference>
<dbReference type="GO" id="GO:0030145">
    <property type="term" value="F:manganese ion binding"/>
    <property type="evidence" value="ECO:0007669"/>
    <property type="project" value="UniProtKB-UniRule"/>
</dbReference>
<dbReference type="GO" id="GO:0070006">
    <property type="term" value="F:metalloaminopeptidase activity"/>
    <property type="evidence" value="ECO:0007669"/>
    <property type="project" value="InterPro"/>
</dbReference>
<dbReference type="GO" id="GO:0006508">
    <property type="term" value="P:proteolysis"/>
    <property type="evidence" value="ECO:0007669"/>
    <property type="project" value="UniProtKB-UniRule"/>
</dbReference>
<dbReference type="CDD" id="cd00433">
    <property type="entry name" value="Peptidase_M17"/>
    <property type="match status" value="1"/>
</dbReference>
<dbReference type="FunFam" id="3.40.630.10:FF:000037">
    <property type="entry name" value="Peptidase B"/>
    <property type="match status" value="1"/>
</dbReference>
<dbReference type="Gene3D" id="3.40.630.10">
    <property type="entry name" value="Zn peptidases"/>
    <property type="match status" value="1"/>
</dbReference>
<dbReference type="HAMAP" id="MF_00504">
    <property type="entry name" value="Aminopeptidase_M17"/>
    <property type="match status" value="1"/>
</dbReference>
<dbReference type="InterPro" id="IPR011356">
    <property type="entry name" value="Leucine_aapep/pepB"/>
</dbReference>
<dbReference type="InterPro" id="IPR047620">
    <property type="entry name" value="M17_PepB-like_N"/>
</dbReference>
<dbReference type="InterPro" id="IPR008330">
    <property type="entry name" value="Pept_M17_PepB"/>
</dbReference>
<dbReference type="InterPro" id="IPR000819">
    <property type="entry name" value="Peptidase_M17_C"/>
</dbReference>
<dbReference type="NCBIfam" id="NF003450">
    <property type="entry name" value="PRK05015.1"/>
    <property type="match status" value="1"/>
</dbReference>
<dbReference type="PANTHER" id="PTHR11963">
    <property type="entry name" value="LEUCINE AMINOPEPTIDASE-RELATED"/>
    <property type="match status" value="1"/>
</dbReference>
<dbReference type="PANTHER" id="PTHR11963:SF20">
    <property type="entry name" value="PEPTIDASE B"/>
    <property type="match status" value="1"/>
</dbReference>
<dbReference type="Pfam" id="PF12404">
    <property type="entry name" value="DUF3663"/>
    <property type="match status" value="1"/>
</dbReference>
<dbReference type="Pfam" id="PF00883">
    <property type="entry name" value="Peptidase_M17"/>
    <property type="match status" value="1"/>
</dbReference>
<dbReference type="PIRSF" id="PIRSF036388">
    <property type="entry name" value="Ctsl_amnpptdse_B"/>
    <property type="match status" value="1"/>
</dbReference>
<dbReference type="PRINTS" id="PR00481">
    <property type="entry name" value="LAMNOPPTDASE"/>
</dbReference>
<dbReference type="SUPFAM" id="SSF53187">
    <property type="entry name" value="Zn-dependent exopeptidases"/>
    <property type="match status" value="1"/>
</dbReference>
<dbReference type="PROSITE" id="PS00631">
    <property type="entry name" value="CYTOSOL_AP"/>
    <property type="match status" value="1"/>
</dbReference>
<keyword id="KW-0031">Aminopeptidase</keyword>
<keyword id="KW-0963">Cytoplasm</keyword>
<keyword id="KW-0378">Hydrolase</keyword>
<keyword id="KW-0464">Manganese</keyword>
<keyword id="KW-0479">Metal-binding</keyword>
<keyword id="KW-0645">Protease</keyword>
<sequence length="432" mass="46671">MSTQMSVFLSHEVAAPQWGEKALVSFNEQGALIHTGESTDLTKIQRAARKFDVQGIKSVVLAGDGWDVEAIWAFHQGYRNPKKYSQLEWVALEEKAQAELEARIKATEFTRDIINKPAEEVAPRQLATMAAEFIRSVAPEGTVTARIVKDKDLLAEGWEGIYAVGRGSDRTSAMLQLDFNPTGDENAPVWACLVGKGITFDSGGYSIKASNFMDSMKADMGGSGTITGGLGLAIMRGLNKRVKLILCCAENMISGRALKLGDVITYKNGKTVEIMNTDAEGRLVLADGLIYASEQNPELIIDCATLTGAAKNALGNDYHALLTFDQALAQEALKSAAEEKEGLWPLPLAEFHREMLPSNFADLSNIGGGDYSPGASTAAAFLSYFVQDYQKGWLHFDCSGTYRKSASDKWSAGATGMGVCTLANLLVEQANK</sequence>
<gene>
    <name evidence="1" type="primary">pepB</name>
    <name type="ordered locus">VV1_0431</name>
</gene>
<proteinExistence type="inferred from homology"/>